<accession>Q92G96</accession>
<keyword id="KW-1003">Cell membrane</keyword>
<keyword id="KW-0472">Membrane</keyword>
<keyword id="KW-0520">NAD</keyword>
<keyword id="KW-0874">Quinone</keyword>
<keyword id="KW-1278">Translocase</keyword>
<keyword id="KW-0812">Transmembrane</keyword>
<keyword id="KW-1133">Transmembrane helix</keyword>
<comment type="function">
    <text evidence="1">NDH-1 shuttles electrons from NADH, via FMN and iron-sulfur (Fe-S) centers, to quinones in the respiratory chain. Couples the redox reaction to proton translocation (for every two electrons transferred, four hydrogen ions are translocated across the cytoplasmic membrane), and thus conserves the redox energy in a proton gradient (By similarity).</text>
</comment>
<comment type="catalytic activity">
    <reaction>
        <text>a quinone + NADH + 5 H(+)(in) = a quinol + NAD(+) + 4 H(+)(out)</text>
        <dbReference type="Rhea" id="RHEA:57888"/>
        <dbReference type="ChEBI" id="CHEBI:15378"/>
        <dbReference type="ChEBI" id="CHEBI:24646"/>
        <dbReference type="ChEBI" id="CHEBI:57540"/>
        <dbReference type="ChEBI" id="CHEBI:57945"/>
        <dbReference type="ChEBI" id="CHEBI:132124"/>
    </reaction>
</comment>
<comment type="subcellular location">
    <subcellularLocation>
        <location evidence="3">Cell membrane</location>
        <topology evidence="3">Multi-pass membrane protein</topology>
    </subcellularLocation>
</comment>
<comment type="similarity">
    <text evidence="3">Belongs to the complex I subunit 4 family.</text>
</comment>
<organism>
    <name type="scientific">Rickettsia conorii (strain ATCC VR-613 / Malish 7)</name>
    <dbReference type="NCBI Taxonomy" id="272944"/>
    <lineage>
        <taxon>Bacteria</taxon>
        <taxon>Pseudomonadati</taxon>
        <taxon>Pseudomonadota</taxon>
        <taxon>Alphaproteobacteria</taxon>
        <taxon>Rickettsiales</taxon>
        <taxon>Rickettsiaceae</taxon>
        <taxon>Rickettsieae</taxon>
        <taxon>Rickettsia</taxon>
        <taxon>spotted fever group</taxon>
    </lineage>
</organism>
<proteinExistence type="inferred from homology"/>
<dbReference type="EC" id="7.1.1.-"/>
<dbReference type="EMBL" id="AE006914">
    <property type="protein sequence ID" value="AAL03765.1"/>
    <property type="molecule type" value="Genomic_DNA"/>
</dbReference>
<dbReference type="PIR" id="C97853">
    <property type="entry name" value="C97853"/>
</dbReference>
<dbReference type="RefSeq" id="WP_010977792.1">
    <property type="nucleotide sequence ID" value="NC_003103.1"/>
</dbReference>
<dbReference type="SMR" id="Q92G96"/>
<dbReference type="GeneID" id="928376"/>
<dbReference type="KEGG" id="rco:RC1227"/>
<dbReference type="PATRIC" id="fig|272944.4.peg.1406"/>
<dbReference type="HOGENOM" id="CLU_007100_4_4_5"/>
<dbReference type="Proteomes" id="UP000000816">
    <property type="component" value="Chromosome"/>
</dbReference>
<dbReference type="GO" id="GO:0005886">
    <property type="term" value="C:plasma membrane"/>
    <property type="evidence" value="ECO:0007669"/>
    <property type="project" value="UniProtKB-SubCell"/>
</dbReference>
<dbReference type="GO" id="GO:0008137">
    <property type="term" value="F:NADH dehydrogenase (ubiquinone) activity"/>
    <property type="evidence" value="ECO:0007669"/>
    <property type="project" value="InterPro"/>
</dbReference>
<dbReference type="GO" id="GO:0048039">
    <property type="term" value="F:ubiquinone binding"/>
    <property type="evidence" value="ECO:0007669"/>
    <property type="project" value="TreeGrafter"/>
</dbReference>
<dbReference type="GO" id="GO:0042773">
    <property type="term" value="P:ATP synthesis coupled electron transport"/>
    <property type="evidence" value="ECO:0007669"/>
    <property type="project" value="InterPro"/>
</dbReference>
<dbReference type="GO" id="GO:0015990">
    <property type="term" value="P:electron transport coupled proton transport"/>
    <property type="evidence" value="ECO:0007669"/>
    <property type="project" value="TreeGrafter"/>
</dbReference>
<dbReference type="InterPro" id="IPR010227">
    <property type="entry name" value="NADH_Q_OxRdtase_chainM/4"/>
</dbReference>
<dbReference type="InterPro" id="IPR003918">
    <property type="entry name" value="NADH_UbQ_OxRdtase"/>
</dbReference>
<dbReference type="InterPro" id="IPR001750">
    <property type="entry name" value="ND/Mrp_TM"/>
</dbReference>
<dbReference type="NCBIfam" id="TIGR01972">
    <property type="entry name" value="NDH_I_M"/>
    <property type="match status" value="1"/>
</dbReference>
<dbReference type="NCBIfam" id="NF004499">
    <property type="entry name" value="PRK05846.1-3"/>
    <property type="match status" value="1"/>
</dbReference>
<dbReference type="NCBIfam" id="NF004506">
    <property type="entry name" value="PRK05846.2-6"/>
    <property type="match status" value="1"/>
</dbReference>
<dbReference type="PANTHER" id="PTHR43507">
    <property type="entry name" value="NADH-UBIQUINONE OXIDOREDUCTASE CHAIN 4"/>
    <property type="match status" value="1"/>
</dbReference>
<dbReference type="PANTHER" id="PTHR43507:SF1">
    <property type="entry name" value="NADH-UBIQUINONE OXIDOREDUCTASE CHAIN 4"/>
    <property type="match status" value="1"/>
</dbReference>
<dbReference type="Pfam" id="PF00361">
    <property type="entry name" value="Proton_antipo_M"/>
    <property type="match status" value="1"/>
</dbReference>
<dbReference type="PRINTS" id="PR01437">
    <property type="entry name" value="NUOXDRDTASE4"/>
</dbReference>
<name>NUOM_RICCN</name>
<gene>
    <name type="primary">nuoM</name>
    <name type="ordered locus">RC1227</name>
</gene>
<feature type="chain" id="PRO_0000118046" description="NADH-quinone oxidoreductase subunit M">
    <location>
        <begin position="1"/>
        <end position="493"/>
    </location>
</feature>
<feature type="transmembrane region" description="Helical" evidence="2">
    <location>
        <begin position="5"/>
        <end position="25"/>
    </location>
</feature>
<feature type="transmembrane region" description="Helical" evidence="2">
    <location>
        <begin position="37"/>
        <end position="57"/>
    </location>
</feature>
<feature type="transmembrane region" description="Helical" evidence="2">
    <location>
        <begin position="89"/>
        <end position="109"/>
    </location>
</feature>
<feature type="transmembrane region" description="Helical" evidence="2">
    <location>
        <begin position="115"/>
        <end position="135"/>
    </location>
</feature>
<feature type="transmembrane region" description="Helical" evidence="2">
    <location>
        <begin position="139"/>
        <end position="159"/>
    </location>
</feature>
<feature type="transmembrane region" description="Helical" evidence="2">
    <location>
        <begin position="172"/>
        <end position="192"/>
    </location>
</feature>
<feature type="transmembrane region" description="Helical" evidence="2">
    <location>
        <begin position="216"/>
        <end position="236"/>
    </location>
</feature>
<feature type="transmembrane region" description="Helical" evidence="2">
    <location>
        <begin position="251"/>
        <end position="271"/>
    </location>
</feature>
<feature type="transmembrane region" description="Helical" evidence="2">
    <location>
        <begin position="280"/>
        <end position="300"/>
    </location>
</feature>
<feature type="transmembrane region" description="Helical" evidence="2">
    <location>
        <begin position="308"/>
        <end position="328"/>
    </location>
</feature>
<feature type="transmembrane region" description="Helical" evidence="2">
    <location>
        <begin position="334"/>
        <end position="354"/>
    </location>
</feature>
<feature type="transmembrane region" description="Helical" evidence="2">
    <location>
        <begin position="375"/>
        <end position="395"/>
    </location>
</feature>
<feature type="transmembrane region" description="Helical" evidence="2">
    <location>
        <begin position="411"/>
        <end position="431"/>
    </location>
</feature>
<feature type="transmembrane region" description="Helical" evidence="2">
    <location>
        <begin position="458"/>
        <end position="478"/>
    </location>
</feature>
<protein>
    <recommendedName>
        <fullName>NADH-quinone oxidoreductase subunit M</fullName>
        <ecNumber>7.1.1.-</ecNumber>
    </recommendedName>
    <alternativeName>
        <fullName>NADH dehydrogenase I subunit M</fullName>
    </alternativeName>
    <alternativeName>
        <fullName>NDH-1 subunit M</fullName>
    </alternativeName>
</protein>
<evidence type="ECO:0000250" key="1"/>
<evidence type="ECO:0000255" key="2"/>
<evidence type="ECO:0000305" key="3"/>
<sequence>MLELPIISISIFLPLISVLYILLFISQSKKADKPIYVMYVAVLSSVLTFISTIYILIEFDSSNPAYQFVERYAWLDKIGLEFHVGVDGISILFVVLTSFLTLICIIGSLFTVKKYIKEYLVCFLLMESFCIGAFTSVNLLLFYLFFEAILVPMYIIIGVWGGKNRIYAALKFFLYTFFGSVFFLLSLIYIYSKMHSFDLTYIFQLTDNIPLFAQQILWWAIFIAFAVKIPIIPFHTWLPDAHVQAPTSGSVILAGILLKLGGYGFLRVLLPLCPSVSQEFAIYVIYLSVIAIIYASLVALAQKDMKKMIAYSSIAHMGYVTIGIFSFTKAGVSGAIFQMLSHGVISSCLFLIVGTLYERLHTKEIAKYGGVASKMPVLAAFFMIAMLGSVGLPGTSGFIGEFLSLLGIYKVNVVATFIAALGIIFGAVYMLKLYKEVMLGEITNKEIMHFRDLYKYEIISIAPLILLIIYFGLMPSSILNVFSLSVENLLVKF</sequence>
<reference key="1">
    <citation type="journal article" date="2001" name="Science">
        <title>Mechanisms of evolution in Rickettsia conorii and R. prowazekii.</title>
        <authorList>
            <person name="Ogata H."/>
            <person name="Audic S."/>
            <person name="Renesto-Audiffren P."/>
            <person name="Fournier P.-E."/>
            <person name="Barbe V."/>
            <person name="Samson D."/>
            <person name="Roux V."/>
            <person name="Cossart P."/>
            <person name="Weissenbach J."/>
            <person name="Claverie J.-M."/>
            <person name="Raoult D."/>
        </authorList>
    </citation>
    <scope>NUCLEOTIDE SEQUENCE [LARGE SCALE GENOMIC DNA]</scope>
    <source>
        <strain>ATCC VR-613 / Malish 7</strain>
    </source>
</reference>